<organism>
    <name type="scientific">Scheffersomyces stipitis (strain ATCC 58785 / CBS 6054 / NBRC 10063 / NRRL Y-11545)</name>
    <name type="common">Yeast</name>
    <name type="synonym">Pichia stipitis</name>
    <dbReference type="NCBI Taxonomy" id="322104"/>
    <lineage>
        <taxon>Eukaryota</taxon>
        <taxon>Fungi</taxon>
        <taxon>Dikarya</taxon>
        <taxon>Ascomycota</taxon>
        <taxon>Saccharomycotina</taxon>
        <taxon>Pichiomycetes</taxon>
        <taxon>Debaryomycetaceae</taxon>
        <taxon>Scheffersomyces</taxon>
    </lineage>
</organism>
<gene>
    <name type="primary">SAR1</name>
    <name type="ORF">PICST_67516</name>
</gene>
<accession>A3LTA2</accession>
<reference key="1">
    <citation type="journal article" date="2007" name="Nat. Biotechnol.">
        <title>Genome sequence of the lignocellulose-bioconverting and xylose-fermenting yeast Pichia stipitis.</title>
        <authorList>
            <person name="Jeffries T.W."/>
            <person name="Grigoriev I.V."/>
            <person name="Grimwood J."/>
            <person name="Laplaza J.M."/>
            <person name="Aerts A."/>
            <person name="Salamov A."/>
            <person name="Schmutz J."/>
            <person name="Lindquist E."/>
            <person name="Dehal P."/>
            <person name="Shapiro H."/>
            <person name="Jin Y.-S."/>
            <person name="Passoth V."/>
            <person name="Richardson P.M."/>
        </authorList>
    </citation>
    <scope>NUCLEOTIDE SEQUENCE [LARGE SCALE GENOMIC DNA]</scope>
    <source>
        <strain>ATCC 58785 / CBS 6054 / NBRC 10063 / NRRL Y-11545</strain>
    </source>
</reference>
<name>SAR1_PICST</name>
<dbReference type="EC" id="3.6.5.-"/>
<dbReference type="EMBL" id="CP000498">
    <property type="protein sequence ID" value="ABN66035.1"/>
    <property type="molecule type" value="Genomic_DNA"/>
</dbReference>
<dbReference type="RefSeq" id="XP_001384064.1">
    <property type="nucleotide sequence ID" value="XM_001384027.1"/>
</dbReference>
<dbReference type="SMR" id="A3LTA2"/>
<dbReference type="FunCoup" id="A3LTA2">
    <property type="interactions" value="948"/>
</dbReference>
<dbReference type="STRING" id="322104.A3LTA2"/>
<dbReference type="GeneID" id="4838846"/>
<dbReference type="KEGG" id="pic:PICST_67516"/>
<dbReference type="eggNOG" id="KOG0077">
    <property type="taxonomic scope" value="Eukaryota"/>
</dbReference>
<dbReference type="HOGENOM" id="CLU_040729_6_0_1"/>
<dbReference type="InParanoid" id="A3LTA2"/>
<dbReference type="OMA" id="GLWNKHG"/>
<dbReference type="OrthoDB" id="2011769at2759"/>
<dbReference type="Proteomes" id="UP000002258">
    <property type="component" value="Chromosome 4"/>
</dbReference>
<dbReference type="GO" id="GO:0030127">
    <property type="term" value="C:COPII vesicle coat"/>
    <property type="evidence" value="ECO:0007669"/>
    <property type="project" value="EnsemblFungi"/>
</dbReference>
<dbReference type="GO" id="GO:0070971">
    <property type="term" value="C:endoplasmic reticulum exit site"/>
    <property type="evidence" value="ECO:0007669"/>
    <property type="project" value="EnsemblFungi"/>
</dbReference>
<dbReference type="GO" id="GO:0005789">
    <property type="term" value="C:endoplasmic reticulum membrane"/>
    <property type="evidence" value="ECO:0007669"/>
    <property type="project" value="UniProtKB-SubCell"/>
</dbReference>
<dbReference type="GO" id="GO:0000139">
    <property type="term" value="C:Golgi membrane"/>
    <property type="evidence" value="ECO:0007669"/>
    <property type="project" value="UniProtKB-SubCell"/>
</dbReference>
<dbReference type="GO" id="GO:0044233">
    <property type="term" value="C:mitochondria-associated endoplasmic reticulum membrane contact site"/>
    <property type="evidence" value="ECO:0007669"/>
    <property type="project" value="EnsemblFungi"/>
</dbReference>
<dbReference type="GO" id="GO:0005739">
    <property type="term" value="C:mitochondrion"/>
    <property type="evidence" value="ECO:0007669"/>
    <property type="project" value="GOC"/>
</dbReference>
<dbReference type="GO" id="GO:0005525">
    <property type="term" value="F:GTP binding"/>
    <property type="evidence" value="ECO:0007669"/>
    <property type="project" value="UniProtKB-KW"/>
</dbReference>
<dbReference type="GO" id="GO:0003924">
    <property type="term" value="F:GTPase activity"/>
    <property type="evidence" value="ECO:0007669"/>
    <property type="project" value="EnsemblFungi"/>
</dbReference>
<dbReference type="GO" id="GO:0090158">
    <property type="term" value="P:endoplasmic reticulum membrane organization"/>
    <property type="evidence" value="ECO:0007669"/>
    <property type="project" value="EnsemblFungi"/>
</dbReference>
<dbReference type="GO" id="GO:0006888">
    <property type="term" value="P:endoplasmic reticulum to Golgi vesicle-mediated transport"/>
    <property type="evidence" value="ECO:0007669"/>
    <property type="project" value="EnsemblFungi"/>
</dbReference>
<dbReference type="GO" id="GO:0006886">
    <property type="term" value="P:intracellular protein transport"/>
    <property type="evidence" value="ECO:0007669"/>
    <property type="project" value="InterPro"/>
</dbReference>
<dbReference type="GO" id="GO:0000266">
    <property type="term" value="P:mitochondrial fission"/>
    <property type="evidence" value="ECO:0007669"/>
    <property type="project" value="EnsemblFungi"/>
</dbReference>
<dbReference type="GO" id="GO:0007006">
    <property type="term" value="P:mitochondrial membrane organization"/>
    <property type="evidence" value="ECO:0007669"/>
    <property type="project" value="EnsemblFungi"/>
</dbReference>
<dbReference type="GO" id="GO:0006998">
    <property type="term" value="P:nuclear envelope organization"/>
    <property type="evidence" value="ECO:0007669"/>
    <property type="project" value="EnsemblFungi"/>
</dbReference>
<dbReference type="GO" id="GO:1902953">
    <property type="term" value="P:positive regulation of ER to Golgi vesicle-mediated transport"/>
    <property type="evidence" value="ECO:0007669"/>
    <property type="project" value="EnsemblFungi"/>
</dbReference>
<dbReference type="GO" id="GO:0070863">
    <property type="term" value="P:positive regulation of protein exit from endoplasmic reticulum"/>
    <property type="evidence" value="ECO:0007669"/>
    <property type="project" value="EnsemblFungi"/>
</dbReference>
<dbReference type="GO" id="GO:0003400">
    <property type="term" value="P:regulation of COPII vesicle coating"/>
    <property type="evidence" value="ECO:0007669"/>
    <property type="project" value="EnsemblFungi"/>
</dbReference>
<dbReference type="GO" id="GO:0016050">
    <property type="term" value="P:vesicle organization"/>
    <property type="evidence" value="ECO:0007669"/>
    <property type="project" value="EnsemblFungi"/>
</dbReference>
<dbReference type="CDD" id="cd00879">
    <property type="entry name" value="Sar1"/>
    <property type="match status" value="1"/>
</dbReference>
<dbReference type="FunFam" id="3.40.50.300:FF:000161">
    <property type="entry name" value="Small COPII coat GTPase"/>
    <property type="match status" value="1"/>
</dbReference>
<dbReference type="Gene3D" id="3.40.50.300">
    <property type="entry name" value="P-loop containing nucleotide triphosphate hydrolases"/>
    <property type="match status" value="1"/>
</dbReference>
<dbReference type="InterPro" id="IPR027417">
    <property type="entry name" value="P-loop_NTPase"/>
</dbReference>
<dbReference type="InterPro" id="IPR005225">
    <property type="entry name" value="Small_GTP-bd"/>
</dbReference>
<dbReference type="InterPro" id="IPR006689">
    <property type="entry name" value="Small_GTPase_ARF/SAR"/>
</dbReference>
<dbReference type="InterPro" id="IPR006687">
    <property type="entry name" value="Small_GTPase_SAR1"/>
</dbReference>
<dbReference type="NCBIfam" id="TIGR00231">
    <property type="entry name" value="small_GTP"/>
    <property type="match status" value="1"/>
</dbReference>
<dbReference type="PANTHER" id="PTHR45684">
    <property type="entry name" value="RE74312P"/>
    <property type="match status" value="1"/>
</dbReference>
<dbReference type="Pfam" id="PF00025">
    <property type="entry name" value="Arf"/>
    <property type="match status" value="1"/>
</dbReference>
<dbReference type="PRINTS" id="PR00328">
    <property type="entry name" value="SAR1GTPBP"/>
</dbReference>
<dbReference type="SMART" id="SM00177">
    <property type="entry name" value="ARF"/>
    <property type="match status" value="1"/>
</dbReference>
<dbReference type="SMART" id="SM00178">
    <property type="entry name" value="SAR"/>
    <property type="match status" value="1"/>
</dbReference>
<dbReference type="SUPFAM" id="SSF52540">
    <property type="entry name" value="P-loop containing nucleoside triphosphate hydrolases"/>
    <property type="match status" value="1"/>
</dbReference>
<dbReference type="PROSITE" id="PS51422">
    <property type="entry name" value="SAR1"/>
    <property type="match status" value="1"/>
</dbReference>
<sequence length="190" mass="21420">MWLFDWFQDVLSSLGLWNKHAKLLFLGLDNAGKTTLLHMLKNDRLATLQPTLHPTSEELAIGSVRFTTFDLGGHQQARRLWKDYFPEVNGIVFLVDAADPERFAESKAELESLFKIEELSHVPFLILGNKIDVPTAVGEMELKSALGLYNTTGKDTGKLPEGSRPIEVYMVSVVMRSGYGEGFKWLSQYI</sequence>
<protein>
    <recommendedName>
        <fullName>Small COPII coat GTPase SAR1</fullName>
        <ecNumber>3.6.5.-</ecNumber>
    </recommendedName>
</protein>
<evidence type="ECO:0000250" key="1"/>
<evidence type="ECO:0000305" key="2"/>
<keyword id="KW-0968">Cytoplasmic vesicle</keyword>
<keyword id="KW-0256">Endoplasmic reticulum</keyword>
<keyword id="KW-0931">ER-Golgi transport</keyword>
<keyword id="KW-0333">Golgi apparatus</keyword>
<keyword id="KW-0342">GTP-binding</keyword>
<keyword id="KW-0378">Hydrolase</keyword>
<keyword id="KW-0472">Membrane</keyword>
<keyword id="KW-0547">Nucleotide-binding</keyword>
<keyword id="KW-0653">Protein transport</keyword>
<keyword id="KW-1185">Reference proteome</keyword>
<keyword id="KW-0813">Transport</keyword>
<comment type="function">
    <text evidence="1">Small GTPase component of the coat protein complex II (COPII) which promotes the formation of transport vesicles from the endoplasmic reticulum (ER). The coat has two main functions, the physical deformation of the endoplasmic reticulum membrane into vesicles and the selection of cargo molecules. SAR1 controls the coat assembly in a stepwise manner. Activated SAR1-GTP binds to membranes first and recruits the SEC23/24 complex. These SEC23/24-SAR1 prebudding intermediates are then collected by the SEC13/31 complex as subunits polymerize to form coated transport vesicles. Conversion to SAR1-GDP triggers coat release and recycles COPII subunits (By similarity).</text>
</comment>
<comment type="catalytic activity">
    <reaction>
        <text>GTP + H2O = GDP + phosphate + H(+)</text>
        <dbReference type="Rhea" id="RHEA:19669"/>
        <dbReference type="ChEBI" id="CHEBI:15377"/>
        <dbReference type="ChEBI" id="CHEBI:15378"/>
        <dbReference type="ChEBI" id="CHEBI:37565"/>
        <dbReference type="ChEBI" id="CHEBI:43474"/>
        <dbReference type="ChEBI" id="CHEBI:58189"/>
    </reaction>
</comment>
<comment type="subunit">
    <text evidence="1">COPII is composed of at least 5 proteins: the SEC23/24 complex, the SEC13/31 complex and SAR1.</text>
</comment>
<comment type="subcellular location">
    <subcellularLocation>
        <location evidence="1">Cytoplasmic vesicle</location>
        <location evidence="1">COPII-coated vesicle membrane</location>
        <topology evidence="1">Peripheral membrane protein</topology>
        <orientation evidence="1">Cytoplasmic side</orientation>
    </subcellularLocation>
    <subcellularLocation>
        <location evidence="1">Endoplasmic reticulum membrane</location>
        <topology evidence="1">Peripheral membrane protein</topology>
        <orientation evidence="1">Cytoplasmic side</orientation>
    </subcellularLocation>
    <subcellularLocation>
        <location evidence="1">Golgi apparatus membrane</location>
        <topology evidence="1">Peripheral membrane protein</topology>
        <orientation evidence="1">Cytoplasmic side</orientation>
    </subcellularLocation>
</comment>
<comment type="similarity">
    <text evidence="2">Belongs to the small GTPase superfamily. SAR1 family.</text>
</comment>
<feature type="chain" id="PRO_0000295523" description="Small COPII coat GTPase SAR1">
    <location>
        <begin position="1"/>
        <end position="190"/>
    </location>
</feature>
<feature type="binding site" evidence="1">
    <location>
        <begin position="27"/>
        <end position="34"/>
    </location>
    <ligand>
        <name>GTP</name>
        <dbReference type="ChEBI" id="CHEBI:37565"/>
    </ligand>
</feature>
<feature type="binding site" evidence="1">
    <location>
        <begin position="70"/>
        <end position="73"/>
    </location>
    <ligand>
        <name>GTP</name>
        <dbReference type="ChEBI" id="CHEBI:37565"/>
    </ligand>
</feature>
<feature type="binding site" evidence="1">
    <location>
        <begin position="129"/>
        <end position="132"/>
    </location>
    <ligand>
        <name>GTP</name>
        <dbReference type="ChEBI" id="CHEBI:37565"/>
    </ligand>
</feature>
<proteinExistence type="inferred from homology"/>